<evidence type="ECO:0000255" key="1">
    <source>
        <dbReference type="HAMAP-Rule" id="MF_00420"/>
    </source>
</evidence>
<evidence type="ECO:0000256" key="2">
    <source>
        <dbReference type="SAM" id="MobiDB-lite"/>
    </source>
</evidence>
<evidence type="ECO:0000305" key="3"/>
<name>PURL_TROWT</name>
<dbReference type="EC" id="6.3.5.3" evidence="1"/>
<dbReference type="EMBL" id="AE014184">
    <property type="protein sequence ID" value="AAO44891.1"/>
    <property type="status" value="ALT_INIT"/>
    <property type="molecule type" value="Genomic_DNA"/>
</dbReference>
<dbReference type="RefSeq" id="WP_011096740.1">
    <property type="nucleotide sequence ID" value="NC_004572.3"/>
</dbReference>
<dbReference type="SMR" id="Q83FE8"/>
<dbReference type="STRING" id="203267.TWT_794"/>
<dbReference type="GeneID" id="67388585"/>
<dbReference type="KEGG" id="twh:TWT_794"/>
<dbReference type="eggNOG" id="COG0046">
    <property type="taxonomic scope" value="Bacteria"/>
</dbReference>
<dbReference type="HOGENOM" id="CLU_003100_0_1_11"/>
<dbReference type="OrthoDB" id="9804441at2"/>
<dbReference type="UniPathway" id="UPA00074">
    <property type="reaction ID" value="UER00128"/>
</dbReference>
<dbReference type="Proteomes" id="UP000002200">
    <property type="component" value="Chromosome"/>
</dbReference>
<dbReference type="GO" id="GO:0005737">
    <property type="term" value="C:cytoplasm"/>
    <property type="evidence" value="ECO:0007669"/>
    <property type="project" value="UniProtKB-SubCell"/>
</dbReference>
<dbReference type="GO" id="GO:0005524">
    <property type="term" value="F:ATP binding"/>
    <property type="evidence" value="ECO:0007669"/>
    <property type="project" value="UniProtKB-UniRule"/>
</dbReference>
<dbReference type="GO" id="GO:0000287">
    <property type="term" value="F:magnesium ion binding"/>
    <property type="evidence" value="ECO:0007669"/>
    <property type="project" value="UniProtKB-UniRule"/>
</dbReference>
<dbReference type="GO" id="GO:0004642">
    <property type="term" value="F:phosphoribosylformylglycinamidine synthase activity"/>
    <property type="evidence" value="ECO:0007669"/>
    <property type="project" value="UniProtKB-UniRule"/>
</dbReference>
<dbReference type="GO" id="GO:0006189">
    <property type="term" value="P:'de novo' IMP biosynthetic process"/>
    <property type="evidence" value="ECO:0007669"/>
    <property type="project" value="UniProtKB-UniRule"/>
</dbReference>
<dbReference type="CDD" id="cd02203">
    <property type="entry name" value="PurL_repeat1"/>
    <property type="match status" value="1"/>
</dbReference>
<dbReference type="CDD" id="cd02204">
    <property type="entry name" value="PurL_repeat2"/>
    <property type="match status" value="1"/>
</dbReference>
<dbReference type="FunFam" id="3.30.1330.10:FF:000004">
    <property type="entry name" value="Phosphoribosylformylglycinamidine synthase subunit PurL"/>
    <property type="match status" value="1"/>
</dbReference>
<dbReference type="Gene3D" id="3.90.650.10">
    <property type="entry name" value="PurM-like C-terminal domain"/>
    <property type="match status" value="2"/>
</dbReference>
<dbReference type="Gene3D" id="3.30.1330.10">
    <property type="entry name" value="PurM-like, N-terminal domain"/>
    <property type="match status" value="2"/>
</dbReference>
<dbReference type="HAMAP" id="MF_00420">
    <property type="entry name" value="PurL_2"/>
    <property type="match status" value="1"/>
</dbReference>
<dbReference type="InterPro" id="IPR010074">
    <property type="entry name" value="PRibForGlyAmidine_synth_PurL"/>
</dbReference>
<dbReference type="InterPro" id="IPR041609">
    <property type="entry name" value="PurL_linker"/>
</dbReference>
<dbReference type="InterPro" id="IPR010918">
    <property type="entry name" value="PurM-like_C_dom"/>
</dbReference>
<dbReference type="InterPro" id="IPR036676">
    <property type="entry name" value="PurM-like_C_sf"/>
</dbReference>
<dbReference type="InterPro" id="IPR016188">
    <property type="entry name" value="PurM-like_N"/>
</dbReference>
<dbReference type="InterPro" id="IPR036921">
    <property type="entry name" value="PurM-like_N_sf"/>
</dbReference>
<dbReference type="NCBIfam" id="TIGR01736">
    <property type="entry name" value="FGAM_synth_II"/>
    <property type="match status" value="1"/>
</dbReference>
<dbReference type="NCBIfam" id="NF002290">
    <property type="entry name" value="PRK01213.1"/>
    <property type="match status" value="1"/>
</dbReference>
<dbReference type="PANTHER" id="PTHR43555">
    <property type="entry name" value="PHOSPHORIBOSYLFORMYLGLYCINAMIDINE SYNTHASE SUBUNIT PURL"/>
    <property type="match status" value="1"/>
</dbReference>
<dbReference type="PANTHER" id="PTHR43555:SF1">
    <property type="entry name" value="PHOSPHORIBOSYLFORMYLGLYCINAMIDINE SYNTHASE SUBUNIT PURL"/>
    <property type="match status" value="1"/>
</dbReference>
<dbReference type="Pfam" id="PF00586">
    <property type="entry name" value="AIRS"/>
    <property type="match status" value="2"/>
</dbReference>
<dbReference type="Pfam" id="PF02769">
    <property type="entry name" value="AIRS_C"/>
    <property type="match status" value="2"/>
</dbReference>
<dbReference type="Pfam" id="PF18072">
    <property type="entry name" value="FGAR-AT_linker"/>
    <property type="match status" value="1"/>
</dbReference>
<dbReference type="PIRSF" id="PIRSF001587">
    <property type="entry name" value="FGAM_synthase_II"/>
    <property type="match status" value="1"/>
</dbReference>
<dbReference type="SUPFAM" id="SSF56042">
    <property type="entry name" value="PurM C-terminal domain-like"/>
    <property type="match status" value="2"/>
</dbReference>
<dbReference type="SUPFAM" id="SSF55326">
    <property type="entry name" value="PurM N-terminal domain-like"/>
    <property type="match status" value="2"/>
</dbReference>
<keyword id="KW-0067">ATP-binding</keyword>
<keyword id="KW-0963">Cytoplasm</keyword>
<keyword id="KW-0436">Ligase</keyword>
<keyword id="KW-0460">Magnesium</keyword>
<keyword id="KW-0479">Metal-binding</keyword>
<keyword id="KW-0547">Nucleotide-binding</keyword>
<keyword id="KW-0658">Purine biosynthesis</keyword>
<keyword id="KW-1185">Reference proteome</keyword>
<sequence>MNMSLPADRDTAKKPSAQKPSAHAQNATAAVDVTALGLTESEYTQICSLLKRSPTKSELAIYSVLWSEHCSYKSSRRHLRQLADLTEVTKKHLLVGIGQNAGVVDIGGGWAAAFKIESHNHPSFIEPFQGAATGIGGIVRDIIAMGAKPVALMDSLRFGAASDPDTQRVADGVVSGISFYGNCLGVPNIGGETAFDPVYQGNPLVNVLCVGVMRRENIRLANASGPGNLVVLFGAPTGRDGIGGASVLASDSFTSDAKANRPAVQIGDPFVEKLLTECCLELYAADLVVAIQDLGAAGISCAASELAHNGRVGIRLDLSAVPLRDTTLAPDEILVSESQERMMAIVHPDNLEAFFEITNRWGISGAVIGEVDNSQYLTVVHEGKTLVRLNPKTLTGPSYNRPVKKPAYLIRRSAANRLPVTNDPHLLREDILQVISCPNLSDKSVITNQYDRYVQGNTALCHPDDAGVIRMYKNTGVALSCDGNSRYSYLDPHAGAQLAVAEAYRNVSVVGATPLAVTNCLNFGNPENPEVMWQFRETCRGLSDACKRLEIPITGGNVSFYNQTDGKDIFPTPVVGILGIVDNLTQTLTSGWNAPDLFIYLLGVTRPEFGGSVWADTMYGHIGGVPPKLDLARESRLSNLLVAGAKKRVFESAHDLSEGGLIQAIVESCLRHGFGADIALDTIRATSLTEALFSESASRVLVSCRSQEDLRDLCRRNSYEYTLIGTTRHTGELTISEIGKFTLNELSDARQKVTRVLFRG</sequence>
<organism>
    <name type="scientific">Tropheryma whipplei (strain Twist)</name>
    <name type="common">Whipple's bacillus</name>
    <dbReference type="NCBI Taxonomy" id="203267"/>
    <lineage>
        <taxon>Bacteria</taxon>
        <taxon>Bacillati</taxon>
        <taxon>Actinomycetota</taxon>
        <taxon>Actinomycetes</taxon>
        <taxon>Micrococcales</taxon>
        <taxon>Tropherymataceae</taxon>
        <taxon>Tropheryma</taxon>
    </lineage>
</organism>
<gene>
    <name evidence="1" type="primary">purL</name>
    <name type="ordered locus">TWT_794</name>
</gene>
<protein>
    <recommendedName>
        <fullName evidence="1">Phosphoribosylformylglycinamidine synthase subunit PurL</fullName>
        <shortName evidence="1">FGAM synthase</shortName>
        <ecNumber evidence="1">6.3.5.3</ecNumber>
    </recommendedName>
    <alternativeName>
        <fullName evidence="1">Formylglycinamide ribonucleotide amidotransferase subunit II</fullName>
        <shortName evidence="1">FGAR amidotransferase II</shortName>
        <shortName evidence="1">FGAR-AT II</shortName>
    </alternativeName>
    <alternativeName>
        <fullName evidence="1">Glutamine amidotransferase PurL</fullName>
    </alternativeName>
    <alternativeName>
        <fullName evidence="1">Phosphoribosylformylglycinamidine synthase subunit II</fullName>
    </alternativeName>
</protein>
<comment type="function">
    <text evidence="1">Part of the phosphoribosylformylglycinamidine synthase complex involved in the purines biosynthetic pathway. Catalyzes the ATP-dependent conversion of formylglycinamide ribonucleotide (FGAR) and glutamine to yield formylglycinamidine ribonucleotide (FGAM) and glutamate. The FGAM synthase complex is composed of three subunits. PurQ produces an ammonia molecule by converting glutamine to glutamate. PurL transfers the ammonia molecule to FGAR to form FGAM in an ATP-dependent manner. PurS interacts with PurQ and PurL and is thought to assist in the transfer of the ammonia molecule from PurQ to PurL.</text>
</comment>
<comment type="catalytic activity">
    <reaction evidence="1">
        <text>N(2)-formyl-N(1)-(5-phospho-beta-D-ribosyl)glycinamide + L-glutamine + ATP + H2O = 2-formamido-N(1)-(5-O-phospho-beta-D-ribosyl)acetamidine + L-glutamate + ADP + phosphate + H(+)</text>
        <dbReference type="Rhea" id="RHEA:17129"/>
        <dbReference type="ChEBI" id="CHEBI:15377"/>
        <dbReference type="ChEBI" id="CHEBI:15378"/>
        <dbReference type="ChEBI" id="CHEBI:29985"/>
        <dbReference type="ChEBI" id="CHEBI:30616"/>
        <dbReference type="ChEBI" id="CHEBI:43474"/>
        <dbReference type="ChEBI" id="CHEBI:58359"/>
        <dbReference type="ChEBI" id="CHEBI:147286"/>
        <dbReference type="ChEBI" id="CHEBI:147287"/>
        <dbReference type="ChEBI" id="CHEBI:456216"/>
        <dbReference type="EC" id="6.3.5.3"/>
    </reaction>
</comment>
<comment type="pathway">
    <text evidence="1">Purine metabolism; IMP biosynthesis via de novo pathway; 5-amino-1-(5-phospho-D-ribosyl)imidazole from N(2)-formyl-N(1)-(5-phospho-D-ribosyl)glycinamide: step 1/2.</text>
</comment>
<comment type="subunit">
    <text evidence="1">Monomer. Part of the FGAM synthase complex composed of 1 PurL, 1 PurQ and 2 PurS subunits.</text>
</comment>
<comment type="subcellular location">
    <subcellularLocation>
        <location evidence="1">Cytoplasm</location>
    </subcellularLocation>
</comment>
<comment type="similarity">
    <text evidence="1">Belongs to the FGAMS family.</text>
</comment>
<comment type="sequence caution" evidence="3">
    <conflict type="erroneous initiation">
        <sequence resource="EMBL-CDS" id="AAO44891"/>
    </conflict>
    <text>Extended N-terminus.</text>
</comment>
<feature type="chain" id="PRO_0000100506" description="Phosphoribosylformylglycinamidine synthase subunit PurL">
    <location>
        <begin position="1"/>
        <end position="760"/>
    </location>
</feature>
<feature type="region of interest" description="Disordered" evidence="2">
    <location>
        <begin position="1"/>
        <end position="25"/>
    </location>
</feature>
<feature type="active site" evidence="1">
    <location>
        <position position="69"/>
    </location>
</feature>
<feature type="active site" description="Proton acceptor" evidence="1">
    <location>
        <position position="119"/>
    </location>
</feature>
<feature type="binding site" evidence="1">
    <location>
        <position position="72"/>
    </location>
    <ligand>
        <name>ATP</name>
        <dbReference type="ChEBI" id="CHEBI:30616"/>
    </ligand>
</feature>
<feature type="binding site" evidence="1">
    <location>
        <position position="115"/>
    </location>
    <ligand>
        <name>ATP</name>
        <dbReference type="ChEBI" id="CHEBI:30616"/>
    </ligand>
</feature>
<feature type="binding site" evidence="1">
    <location>
        <position position="117"/>
    </location>
    <ligand>
        <name>Mg(2+)</name>
        <dbReference type="ChEBI" id="CHEBI:18420"/>
        <label>1</label>
    </ligand>
</feature>
<feature type="binding site" evidence="1">
    <location>
        <begin position="118"/>
        <end position="121"/>
    </location>
    <ligand>
        <name>substrate</name>
    </ligand>
</feature>
<feature type="binding site" evidence="1">
    <location>
        <position position="140"/>
    </location>
    <ligand>
        <name>substrate</name>
    </ligand>
</feature>
<feature type="binding site" evidence="1">
    <location>
        <position position="141"/>
    </location>
    <ligand>
        <name>Mg(2+)</name>
        <dbReference type="ChEBI" id="CHEBI:18420"/>
        <label>2</label>
    </ligand>
</feature>
<feature type="binding site" evidence="1">
    <location>
        <position position="265"/>
    </location>
    <ligand>
        <name>substrate</name>
    </ligand>
</feature>
<feature type="binding site" evidence="1">
    <location>
        <position position="293"/>
    </location>
    <ligand>
        <name>Mg(2+)</name>
        <dbReference type="ChEBI" id="CHEBI:18420"/>
        <label>2</label>
    </ligand>
</feature>
<feature type="binding site" evidence="1">
    <location>
        <begin position="337"/>
        <end position="339"/>
    </location>
    <ligand>
        <name>substrate</name>
    </ligand>
</feature>
<feature type="binding site" evidence="1">
    <location>
        <position position="519"/>
    </location>
    <ligand>
        <name>ATP</name>
        <dbReference type="ChEBI" id="CHEBI:30616"/>
    </ligand>
</feature>
<feature type="binding site" evidence="1">
    <location>
        <position position="556"/>
    </location>
    <ligand>
        <name>ATP</name>
        <dbReference type="ChEBI" id="CHEBI:30616"/>
    </ligand>
</feature>
<feature type="binding site" evidence="1">
    <location>
        <position position="557"/>
    </location>
    <ligand>
        <name>Mg(2+)</name>
        <dbReference type="ChEBI" id="CHEBI:18420"/>
        <label>1</label>
    </ligand>
</feature>
<feature type="binding site" evidence="1">
    <location>
        <position position="559"/>
    </location>
    <ligand>
        <name>substrate</name>
    </ligand>
</feature>
<reference key="1">
    <citation type="journal article" date="2003" name="Genome Res.">
        <title>Tropheryma whipplei twist: a human pathogenic Actinobacteria with a reduced genome.</title>
        <authorList>
            <person name="Raoult D."/>
            <person name="Ogata H."/>
            <person name="Audic S."/>
            <person name="Robert C."/>
            <person name="Suhre K."/>
            <person name="Drancourt M."/>
            <person name="Claverie J.-M."/>
        </authorList>
    </citation>
    <scope>NUCLEOTIDE SEQUENCE [LARGE SCALE GENOMIC DNA]</scope>
    <source>
        <strain>Twist</strain>
    </source>
</reference>
<accession>Q83FE8</accession>
<proteinExistence type="inferred from homology"/>